<evidence type="ECO:0000250" key="1">
    <source>
        <dbReference type="UniProtKB" id="Q4W944"/>
    </source>
</evidence>
<evidence type="ECO:0000250" key="2">
    <source>
        <dbReference type="UniProtKB" id="Q5BH30"/>
    </source>
</evidence>
<evidence type="ECO:0000269" key="3">
    <source>
    </source>
</evidence>
<evidence type="ECO:0000269" key="4">
    <source>
    </source>
</evidence>
<evidence type="ECO:0000303" key="5">
    <source>
    </source>
</evidence>
<evidence type="ECO:0000305" key="6">
    <source>
    </source>
</evidence>
<proteinExistence type="evidence at transcript level"/>
<reference key="1">
    <citation type="journal article" date="2013" name="PLoS Genet.">
        <title>Plant-symbiotic fungi as chemical engineers: Multi-genome analysis of the Clavicipitaceae reveals dynamics of alkaloid loci.</title>
        <authorList>
            <person name="Schardl C.L."/>
            <person name="Young C.A."/>
            <person name="Hesse U."/>
            <person name="Amyotte S.G."/>
            <person name="Andreeva K."/>
            <person name="Calie P.J."/>
            <person name="Fleetwood D.J."/>
            <person name="Haws D.C."/>
            <person name="Moore N."/>
            <person name="Oeser B."/>
            <person name="Panaccione D.G."/>
            <person name="Schweri K.K."/>
            <person name="Voisey C.R."/>
            <person name="Farman M.L."/>
            <person name="Jaromczyk J.W."/>
            <person name="Roe B.A."/>
            <person name="O'Sullivan D.M."/>
            <person name="Scott B."/>
            <person name="Tudzynski P."/>
            <person name="An Z."/>
            <person name="Arnaoudova E.G."/>
            <person name="Bullock C.T."/>
            <person name="Charlton N.D."/>
            <person name="Chen L."/>
            <person name="Cox M."/>
            <person name="Dinkins R.D."/>
            <person name="Florea S."/>
            <person name="Glenn A.E."/>
            <person name="Gordon A."/>
            <person name="Gueldener U."/>
            <person name="Harris D.R."/>
            <person name="Hollin W."/>
            <person name="Jaromczyk J."/>
            <person name="Johnson R.D."/>
            <person name="Khan A.K."/>
            <person name="Leistner E."/>
            <person name="Leuchtmann A."/>
            <person name="Li C."/>
            <person name="Liu J."/>
            <person name="Liu J."/>
            <person name="Liu M."/>
            <person name="Mace W."/>
            <person name="Machado C."/>
            <person name="Nagabhyru P."/>
            <person name="Pan J."/>
            <person name="Schmid J."/>
            <person name="Sugawara K."/>
            <person name="Steiner U."/>
            <person name="Takach J.E."/>
            <person name="Tanaka E."/>
            <person name="Webb J.S."/>
            <person name="Wilson E.V."/>
            <person name="Wiseman J.L."/>
            <person name="Yoshida R."/>
            <person name="Zeng Z."/>
        </authorList>
    </citation>
    <scope>NUCLEOTIDE SEQUENCE [LARGE SCALE GENOMIC DNA]</scope>
    <source>
        <strain>20.1</strain>
    </source>
</reference>
<reference key="2">
    <citation type="journal article" date="2016" name="Fungal Biol. Biotechnol.">
        <title>Identification and characterization of the ergochrome gene cluster in the plant pathogenic fungus Claviceps purpurea.</title>
        <authorList>
            <person name="Neubauer L."/>
            <person name="Dopstadt J."/>
            <person name="Humpf H.U."/>
            <person name="Tudzynski P."/>
        </authorList>
    </citation>
    <scope>FUNCTION</scope>
    <scope>INDUCTION</scope>
</reference>
<reference key="3">
    <citation type="journal article" date="2020" name="Org. Lett.">
        <title>Unraveling the fungal strategy for tetrahydroxanthone biosynthesis and diversification.</title>
        <authorList>
            <person name="Wei X."/>
            <person name="Matsuda Y."/>
        </authorList>
    </citation>
    <scope>FUNCTION</scope>
</reference>
<accession>M1WCF2</accession>
<feature type="chain" id="PRO_0000443975" description="Ergochrome gene cluster protein CPUR_05426">
    <location>
        <begin position="1"/>
        <end position="119"/>
    </location>
</feature>
<comment type="function">
    <text evidence="1 2 3 4">Part of the ergochrome gene cluster responsible for the typical purple-black color of the ergot sclerotia (PubMed:28955461). The ergochrome gene cluster produces several ergot pigments including the yellow ergochrome secalonic acid and its derivatives, as well as the red anthraquinones endocrocin and clavorubin (PubMed:28955461). The pathway begins with the synthesis of atrochrysone thioester by the polyketide synthase (PKS) CPUR_05437 (By similarity). The atrochrysone carboxyl ACP thioesterase CPUR_05436 then breaks the thioester bond and releases the atrochrysone carboxylic acid from CPUR_05437 (By similarity). The atrochrysone carboxylic acid is then converted to atrochrysone which is further transformed into emodin anthrone (By similarity). The next step is performed by the anthrone oxygenase CPUR_05434 that catalyzes the oxidation of emodinanthrone to emodin (By similarity). Emodin is further modified to yield monodictyphenone via several steps involving CPUR_05427, CPUR_05428, CPUR_05429 and CPUR_05430 (By similarity). The short chain dehydrogenase/reductase CPUR_05418 then catalyzes the C-5 ketoreduction to give the xanthone skeleton of the monomeric units (PubMed:32105084). Ergochromes formation requires further dimerization steps of different xanthone units, probably catalyzed by the cytochrome P450 monooxygenase CPUR_05419 (PubMed:28955461). CPUR_05425, CPUR_05426 and CPUR_05431 are unique to Claviceps, thus it is likely that they are involved in further modification of xanthone units or in their dimerization (PubMed:28955461). The yellow ergochromes and the red anthraquinone pigments endocrocin and clavorubin are products from the same PKS derived precursors and the latter are likely shunt products in the pathway of xanthone biosynthesis (PubMed:28955461). It is proposed that atrochrysone carboxylic acid released from the PKS CPUR_05437 can also be converted to endocrocin anthrone which is further oxidized into endocrocin by CPUR_05435 (By similarity). Endocrocin could be then modified to clavorubin, possibly by CPUR_05423 and CPUR_05431 (PubMed:28955461). Clavorubin is the principal anthraquinone metabolite produced by the cluster with a much higher yield compared to endocrocin (PubMed:28955461).</text>
</comment>
<comment type="pathway">
    <text evidence="6">Pigment biosynthesis.</text>
</comment>
<comment type="induction">
    <text evidence="3">Expression correlates with the formation of the sclerotia and thus the pigment production and is directly regulated by the cluster-specific activator CPUR_05433 (PubMed:28955461).</text>
</comment>
<name>PIG4_CLAP2</name>
<dbReference type="EMBL" id="CAGA01000032">
    <property type="protein sequence ID" value="CCE31573.1"/>
    <property type="molecule type" value="Genomic_DNA"/>
</dbReference>
<dbReference type="SMR" id="M1WCF2"/>
<dbReference type="STRING" id="1111077.M1WCF2"/>
<dbReference type="VEuPathDB" id="FungiDB:CPUR_05426"/>
<dbReference type="HOGENOM" id="CLU_108113_0_0_1"/>
<dbReference type="OrthoDB" id="3758478at2759"/>
<dbReference type="Proteomes" id="UP000016801">
    <property type="component" value="Unassembled WGS sequence"/>
</dbReference>
<dbReference type="InterPro" id="IPR032710">
    <property type="entry name" value="NTF2-like_dom_sf"/>
</dbReference>
<dbReference type="SUPFAM" id="SSF54427">
    <property type="entry name" value="NTF2-like"/>
    <property type="match status" value="1"/>
</dbReference>
<gene>
    <name type="ORF">CPUR_05426</name>
</gene>
<keyword id="KW-1185">Reference proteome</keyword>
<sequence>MPAPVEIQQATLSKFIDAWKRWNADDFIGLWSDSFTFQVLPFSDGKPTRPRDMIAPMYRNFIETLTNYKAIFIAFSESGDKIERLEEVNDNAFRKEWDPKCHAYWGYGQPPKAKAVAGS</sequence>
<protein>
    <recommendedName>
        <fullName evidence="5">Ergochrome gene cluster protein CPUR_05426</fullName>
    </recommendedName>
</protein>
<organism>
    <name type="scientific">Claviceps purpurea (strain 20.1)</name>
    <name type="common">Ergot fungus</name>
    <name type="synonym">Sphacelia segetum</name>
    <dbReference type="NCBI Taxonomy" id="1111077"/>
    <lineage>
        <taxon>Eukaryota</taxon>
        <taxon>Fungi</taxon>
        <taxon>Dikarya</taxon>
        <taxon>Ascomycota</taxon>
        <taxon>Pezizomycotina</taxon>
        <taxon>Sordariomycetes</taxon>
        <taxon>Hypocreomycetidae</taxon>
        <taxon>Hypocreales</taxon>
        <taxon>Clavicipitaceae</taxon>
        <taxon>Claviceps</taxon>
    </lineage>
</organism>